<gene>
    <name type="primary">wtf12</name>
    <name type="ORF">SPCC1281.09</name>
    <name type="ORF">SPCC622.21</name>
</gene>
<organism>
    <name type="scientific">Schizosaccharomyces pombe (strain 972 / ATCC 24843)</name>
    <name type="common">Fission yeast</name>
    <dbReference type="NCBI Taxonomy" id="284812"/>
    <lineage>
        <taxon>Eukaryota</taxon>
        <taxon>Fungi</taxon>
        <taxon>Dikarya</taxon>
        <taxon>Ascomycota</taxon>
        <taxon>Taphrinomycotina</taxon>
        <taxon>Schizosaccharomycetes</taxon>
        <taxon>Schizosaccharomycetales</taxon>
        <taxon>Schizosaccharomycetaceae</taxon>
        <taxon>Schizosaccharomyces</taxon>
    </lineage>
</organism>
<sequence>MKNNYTSLKSSVDEEDELKTGHEIDLEKGPLPEHNSEGESTLPPYSDISKLANLVPEDSSTGPTETANPNVERRQEFKDLHPNIYSLLRLLIAVLAVSVVFFTAWGCVNPLEKSTFGKIAFFVLIGLTCLILLITMILEPGLIGISIMKRLIGDNGNDERDYFVENRLLSSPDCDARQHANSDTAIPLREMNPESEA</sequence>
<accession>Q8NIP8</accession>
<accession>Q8NIP9</accession>
<feature type="chain" id="PRO_0000193226" description="Uncharacterized protein wtf12">
    <location>
        <begin position="1"/>
        <end position="197"/>
    </location>
</feature>
<feature type="transmembrane region" description="Helical" evidence="1">
    <location>
        <begin position="83"/>
        <end position="105"/>
    </location>
</feature>
<feature type="transmembrane region" description="Helical" evidence="1">
    <location>
        <begin position="120"/>
        <end position="142"/>
    </location>
</feature>
<feature type="region of interest" description="Disordered" evidence="2">
    <location>
        <begin position="1"/>
        <end position="46"/>
    </location>
</feature>
<feature type="region of interest" description="Disordered" evidence="2">
    <location>
        <begin position="54"/>
        <end position="73"/>
    </location>
</feature>
<feature type="compositionally biased region" description="Polar residues" evidence="2">
    <location>
        <begin position="1"/>
        <end position="10"/>
    </location>
</feature>
<feature type="compositionally biased region" description="Basic and acidic residues" evidence="2">
    <location>
        <begin position="18"/>
        <end position="37"/>
    </location>
</feature>
<feature type="compositionally biased region" description="Polar residues" evidence="2">
    <location>
        <begin position="58"/>
        <end position="69"/>
    </location>
</feature>
<proteinExistence type="inferred from homology"/>
<protein>
    <recommendedName>
        <fullName>Uncharacterized protein wtf12</fullName>
    </recommendedName>
</protein>
<reference key="1">
    <citation type="journal article" date="2002" name="Nature">
        <title>The genome sequence of Schizosaccharomyces pombe.</title>
        <authorList>
            <person name="Wood V."/>
            <person name="Gwilliam R."/>
            <person name="Rajandream M.A."/>
            <person name="Lyne M.H."/>
            <person name="Lyne R."/>
            <person name="Stewart A."/>
            <person name="Sgouros J.G."/>
            <person name="Peat N."/>
            <person name="Hayles J."/>
            <person name="Baker S.G."/>
            <person name="Basham D."/>
            <person name="Bowman S."/>
            <person name="Brooks K."/>
            <person name="Brown D."/>
            <person name="Brown S."/>
            <person name="Chillingworth T."/>
            <person name="Churcher C.M."/>
            <person name="Collins M."/>
            <person name="Connor R."/>
            <person name="Cronin A."/>
            <person name="Davis P."/>
            <person name="Feltwell T."/>
            <person name="Fraser A."/>
            <person name="Gentles S."/>
            <person name="Goble A."/>
            <person name="Hamlin N."/>
            <person name="Harris D.E."/>
            <person name="Hidalgo J."/>
            <person name="Hodgson G."/>
            <person name="Holroyd S."/>
            <person name="Hornsby T."/>
            <person name="Howarth S."/>
            <person name="Huckle E.J."/>
            <person name="Hunt S."/>
            <person name="Jagels K."/>
            <person name="James K.D."/>
            <person name="Jones L."/>
            <person name="Jones M."/>
            <person name="Leather S."/>
            <person name="McDonald S."/>
            <person name="McLean J."/>
            <person name="Mooney P."/>
            <person name="Moule S."/>
            <person name="Mungall K.L."/>
            <person name="Murphy L.D."/>
            <person name="Niblett D."/>
            <person name="Odell C."/>
            <person name="Oliver K."/>
            <person name="O'Neil S."/>
            <person name="Pearson D."/>
            <person name="Quail M.A."/>
            <person name="Rabbinowitsch E."/>
            <person name="Rutherford K.M."/>
            <person name="Rutter S."/>
            <person name="Saunders D."/>
            <person name="Seeger K."/>
            <person name="Sharp S."/>
            <person name="Skelton J."/>
            <person name="Simmonds M.N."/>
            <person name="Squares R."/>
            <person name="Squares S."/>
            <person name="Stevens K."/>
            <person name="Taylor K."/>
            <person name="Taylor R.G."/>
            <person name="Tivey A."/>
            <person name="Walsh S.V."/>
            <person name="Warren T."/>
            <person name="Whitehead S."/>
            <person name="Woodward J.R."/>
            <person name="Volckaert G."/>
            <person name="Aert R."/>
            <person name="Robben J."/>
            <person name="Grymonprez B."/>
            <person name="Weltjens I."/>
            <person name="Vanstreels E."/>
            <person name="Rieger M."/>
            <person name="Schaefer M."/>
            <person name="Mueller-Auer S."/>
            <person name="Gabel C."/>
            <person name="Fuchs M."/>
            <person name="Duesterhoeft A."/>
            <person name="Fritzc C."/>
            <person name="Holzer E."/>
            <person name="Moestl D."/>
            <person name="Hilbert H."/>
            <person name="Borzym K."/>
            <person name="Langer I."/>
            <person name="Beck A."/>
            <person name="Lehrach H."/>
            <person name="Reinhardt R."/>
            <person name="Pohl T.M."/>
            <person name="Eger P."/>
            <person name="Zimmermann W."/>
            <person name="Wedler H."/>
            <person name="Wambutt R."/>
            <person name="Purnelle B."/>
            <person name="Goffeau A."/>
            <person name="Cadieu E."/>
            <person name="Dreano S."/>
            <person name="Gloux S."/>
            <person name="Lelaure V."/>
            <person name="Mottier S."/>
            <person name="Galibert F."/>
            <person name="Aves S.J."/>
            <person name="Xiang Z."/>
            <person name="Hunt C."/>
            <person name="Moore K."/>
            <person name="Hurst S.M."/>
            <person name="Lucas M."/>
            <person name="Rochet M."/>
            <person name="Gaillardin C."/>
            <person name="Tallada V.A."/>
            <person name="Garzon A."/>
            <person name="Thode G."/>
            <person name="Daga R.R."/>
            <person name="Cruzado L."/>
            <person name="Jimenez J."/>
            <person name="Sanchez M."/>
            <person name="del Rey F."/>
            <person name="Benito J."/>
            <person name="Dominguez A."/>
            <person name="Revuelta J.L."/>
            <person name="Moreno S."/>
            <person name="Armstrong J."/>
            <person name="Forsburg S.L."/>
            <person name="Cerutti L."/>
            <person name="Lowe T."/>
            <person name="McCombie W.R."/>
            <person name="Paulsen I."/>
            <person name="Potashkin J."/>
            <person name="Shpakovski G.V."/>
            <person name="Ussery D."/>
            <person name="Barrell B.G."/>
            <person name="Nurse P."/>
        </authorList>
    </citation>
    <scope>NUCLEOTIDE SEQUENCE [LARGE SCALE GENOMIC DNA]</scope>
    <source>
        <strain>972 / ATCC 24843</strain>
    </source>
</reference>
<reference key="2">
    <citation type="journal article" date="2006" name="Nat. Biotechnol.">
        <title>ORFeome cloning and global analysis of protein localization in the fission yeast Schizosaccharomyces pombe.</title>
        <authorList>
            <person name="Matsuyama A."/>
            <person name="Arai R."/>
            <person name="Yashiroda Y."/>
            <person name="Shirai A."/>
            <person name="Kamata A."/>
            <person name="Sekido S."/>
            <person name="Kobayashi Y."/>
            <person name="Hashimoto A."/>
            <person name="Hamamoto M."/>
            <person name="Hiraoka Y."/>
            <person name="Horinouchi S."/>
            <person name="Yoshida M."/>
        </authorList>
    </citation>
    <scope>SUBCELLULAR LOCATION [LARGE SCALE ANALYSIS]</scope>
</reference>
<comment type="subcellular location">
    <subcellularLocation>
        <location evidence="3">Endoplasmic reticulum membrane</location>
        <topology evidence="3">Multi-pass membrane protein</topology>
    </subcellularLocation>
</comment>
<comment type="similarity">
    <text evidence="4">Belongs to the WTF family.</text>
</comment>
<name>WTF12_SCHPO</name>
<dbReference type="EMBL" id="CU329672">
    <property type="protein sequence ID" value="CAB63875.2"/>
    <property type="molecule type" value="Genomic_DNA"/>
</dbReference>
<dbReference type="RefSeq" id="NP_001018852.1">
    <property type="nucleotide sequence ID" value="NM_001023162.1"/>
</dbReference>
<dbReference type="PaxDb" id="4896-SPCC622.21.1"/>
<dbReference type="EnsemblFungi" id="SPCC622.21.1">
    <property type="protein sequence ID" value="SPCC622.21.1:pep"/>
    <property type="gene ID" value="SPCC622.21"/>
</dbReference>
<dbReference type="PomBase" id="SPCC622.21">
    <property type="gene designation" value="wtf12"/>
</dbReference>
<dbReference type="VEuPathDB" id="FungiDB:SPCC622.21"/>
<dbReference type="HOGENOM" id="CLU_1384883_0_0_1"/>
<dbReference type="InParanoid" id="Q8NIP8"/>
<dbReference type="PhylomeDB" id="Q8NIP8"/>
<dbReference type="PRO" id="PR:Q8NIP8"/>
<dbReference type="Proteomes" id="UP000002485">
    <property type="component" value="Chromosome III"/>
</dbReference>
<dbReference type="GO" id="GO:0005789">
    <property type="term" value="C:endoplasmic reticulum membrane"/>
    <property type="evidence" value="ECO:0007669"/>
    <property type="project" value="UniProtKB-SubCell"/>
</dbReference>
<dbReference type="GO" id="GO:0110134">
    <property type="term" value="P:meiotic drive"/>
    <property type="evidence" value="ECO:0007669"/>
    <property type="project" value="InterPro"/>
</dbReference>
<dbReference type="InterPro" id="IPR004982">
    <property type="entry name" value="WTF"/>
</dbReference>
<dbReference type="Pfam" id="PF03303">
    <property type="entry name" value="WTF"/>
    <property type="match status" value="1"/>
</dbReference>
<evidence type="ECO:0000255" key="1"/>
<evidence type="ECO:0000256" key="2">
    <source>
        <dbReference type="SAM" id="MobiDB-lite"/>
    </source>
</evidence>
<evidence type="ECO:0000269" key="3">
    <source>
    </source>
</evidence>
<evidence type="ECO:0000305" key="4"/>
<keyword id="KW-0256">Endoplasmic reticulum</keyword>
<keyword id="KW-0472">Membrane</keyword>
<keyword id="KW-1185">Reference proteome</keyword>
<keyword id="KW-0812">Transmembrane</keyword>
<keyword id="KW-1133">Transmembrane helix</keyword>